<name>UPPP_ALKMQ</name>
<dbReference type="EC" id="3.6.1.27" evidence="1"/>
<dbReference type="EMBL" id="CP000724">
    <property type="protein sequence ID" value="ABR50413.1"/>
    <property type="molecule type" value="Genomic_DNA"/>
</dbReference>
<dbReference type="RefSeq" id="WP_012065360.1">
    <property type="nucleotide sequence ID" value="NC_009633.1"/>
</dbReference>
<dbReference type="SMR" id="A6TW45"/>
<dbReference type="STRING" id="293826.Amet_4339"/>
<dbReference type="KEGG" id="amt:Amet_4339"/>
<dbReference type="eggNOG" id="COG1968">
    <property type="taxonomic scope" value="Bacteria"/>
</dbReference>
<dbReference type="HOGENOM" id="CLU_060296_1_2_9"/>
<dbReference type="OrthoDB" id="9808289at2"/>
<dbReference type="Proteomes" id="UP000001572">
    <property type="component" value="Chromosome"/>
</dbReference>
<dbReference type="GO" id="GO:0005886">
    <property type="term" value="C:plasma membrane"/>
    <property type="evidence" value="ECO:0007669"/>
    <property type="project" value="UniProtKB-SubCell"/>
</dbReference>
<dbReference type="GO" id="GO:0050380">
    <property type="term" value="F:undecaprenyl-diphosphatase activity"/>
    <property type="evidence" value="ECO:0007669"/>
    <property type="project" value="UniProtKB-UniRule"/>
</dbReference>
<dbReference type="GO" id="GO:0071555">
    <property type="term" value="P:cell wall organization"/>
    <property type="evidence" value="ECO:0007669"/>
    <property type="project" value="UniProtKB-KW"/>
</dbReference>
<dbReference type="GO" id="GO:0009252">
    <property type="term" value="P:peptidoglycan biosynthetic process"/>
    <property type="evidence" value="ECO:0007669"/>
    <property type="project" value="UniProtKB-KW"/>
</dbReference>
<dbReference type="GO" id="GO:0008360">
    <property type="term" value="P:regulation of cell shape"/>
    <property type="evidence" value="ECO:0007669"/>
    <property type="project" value="UniProtKB-KW"/>
</dbReference>
<dbReference type="GO" id="GO:0046677">
    <property type="term" value="P:response to antibiotic"/>
    <property type="evidence" value="ECO:0007669"/>
    <property type="project" value="UniProtKB-UniRule"/>
</dbReference>
<dbReference type="HAMAP" id="MF_01006">
    <property type="entry name" value="Undec_diphosphatase"/>
    <property type="match status" value="1"/>
</dbReference>
<dbReference type="InterPro" id="IPR003824">
    <property type="entry name" value="UppP"/>
</dbReference>
<dbReference type="NCBIfam" id="TIGR00753">
    <property type="entry name" value="undec_PP_bacA"/>
    <property type="match status" value="1"/>
</dbReference>
<dbReference type="PANTHER" id="PTHR30622">
    <property type="entry name" value="UNDECAPRENYL-DIPHOSPHATASE"/>
    <property type="match status" value="1"/>
</dbReference>
<dbReference type="PANTHER" id="PTHR30622:SF4">
    <property type="entry name" value="UNDECAPRENYL-DIPHOSPHATASE"/>
    <property type="match status" value="1"/>
</dbReference>
<dbReference type="Pfam" id="PF02673">
    <property type="entry name" value="BacA"/>
    <property type="match status" value="1"/>
</dbReference>
<proteinExistence type="inferred from homology"/>
<keyword id="KW-0046">Antibiotic resistance</keyword>
<keyword id="KW-1003">Cell membrane</keyword>
<keyword id="KW-0133">Cell shape</keyword>
<keyword id="KW-0961">Cell wall biogenesis/degradation</keyword>
<keyword id="KW-0378">Hydrolase</keyword>
<keyword id="KW-0472">Membrane</keyword>
<keyword id="KW-0573">Peptidoglycan synthesis</keyword>
<keyword id="KW-1185">Reference proteome</keyword>
<keyword id="KW-0812">Transmembrane</keyword>
<keyword id="KW-1133">Transmembrane helix</keyword>
<organism>
    <name type="scientific">Alkaliphilus metalliredigens (strain QYMF)</name>
    <dbReference type="NCBI Taxonomy" id="293826"/>
    <lineage>
        <taxon>Bacteria</taxon>
        <taxon>Bacillati</taxon>
        <taxon>Bacillota</taxon>
        <taxon>Clostridia</taxon>
        <taxon>Peptostreptococcales</taxon>
        <taxon>Natronincolaceae</taxon>
        <taxon>Alkaliphilus</taxon>
    </lineage>
</organism>
<evidence type="ECO:0000255" key="1">
    <source>
        <dbReference type="HAMAP-Rule" id="MF_01006"/>
    </source>
</evidence>
<comment type="function">
    <text evidence="1">Catalyzes the dephosphorylation of undecaprenyl diphosphate (UPP). Confers resistance to bacitracin.</text>
</comment>
<comment type="catalytic activity">
    <reaction evidence="1">
        <text>di-trans,octa-cis-undecaprenyl diphosphate + H2O = di-trans,octa-cis-undecaprenyl phosphate + phosphate + H(+)</text>
        <dbReference type="Rhea" id="RHEA:28094"/>
        <dbReference type="ChEBI" id="CHEBI:15377"/>
        <dbReference type="ChEBI" id="CHEBI:15378"/>
        <dbReference type="ChEBI" id="CHEBI:43474"/>
        <dbReference type="ChEBI" id="CHEBI:58405"/>
        <dbReference type="ChEBI" id="CHEBI:60392"/>
        <dbReference type="EC" id="3.6.1.27"/>
    </reaction>
</comment>
<comment type="subcellular location">
    <subcellularLocation>
        <location evidence="1">Cell membrane</location>
        <topology evidence="1">Multi-pass membrane protein</topology>
    </subcellularLocation>
</comment>
<comment type="miscellaneous">
    <text>Bacitracin is thought to be involved in the inhibition of peptidoglycan synthesis by sequestering undecaprenyl diphosphate, thereby reducing the pool of lipid carrier available.</text>
</comment>
<comment type="similarity">
    <text evidence="1">Belongs to the UppP family.</text>
</comment>
<reference key="1">
    <citation type="journal article" date="2016" name="Genome Announc.">
        <title>Complete genome sequence of Alkaliphilus metalliredigens strain QYMF, an alkaliphilic and metal-reducing bacterium isolated from borax-contaminated leachate ponds.</title>
        <authorList>
            <person name="Hwang C."/>
            <person name="Copeland A."/>
            <person name="Lucas S."/>
            <person name="Lapidus A."/>
            <person name="Barry K."/>
            <person name="Detter J.C."/>
            <person name="Glavina Del Rio T."/>
            <person name="Hammon N."/>
            <person name="Israni S."/>
            <person name="Dalin E."/>
            <person name="Tice H."/>
            <person name="Pitluck S."/>
            <person name="Chertkov O."/>
            <person name="Brettin T."/>
            <person name="Bruce D."/>
            <person name="Han C."/>
            <person name="Schmutz J."/>
            <person name="Larimer F."/>
            <person name="Land M.L."/>
            <person name="Hauser L."/>
            <person name="Kyrpides N."/>
            <person name="Mikhailova N."/>
            <person name="Ye Q."/>
            <person name="Zhou J."/>
            <person name="Richardson P."/>
            <person name="Fields M.W."/>
        </authorList>
    </citation>
    <scope>NUCLEOTIDE SEQUENCE [LARGE SCALE GENOMIC DNA]</scope>
    <source>
        <strain>QYMF</strain>
    </source>
</reference>
<sequence length="275" mass="30322">MTTFKAILLGIVQGLTEFLPVSSSGHLAVTQHLLGVPEDRILFLTILLHVGTLFSVFFVYADDIFMICKEFILMIVDLLTGKGIRVNNQYRKLGLLIIVATIPTGIIGLFFKDLFTSFYNSTLIIGISLLVTGTLLWTAEKVNTGKRDIKDMNWFDAVIVGLFQGLAITPGISRSGSTIVGSLFRGFNKELATKFSFLISIPAILGATVFEVKDVLEVGLGDFTLTMLIAGVLASFLSGVFAIRTLINFIKKEKLYYFSYYTWTVGSIVILFSLL</sequence>
<accession>A6TW45</accession>
<protein>
    <recommendedName>
        <fullName evidence="1">Undecaprenyl-diphosphatase</fullName>
        <ecNumber evidence="1">3.6.1.27</ecNumber>
    </recommendedName>
    <alternativeName>
        <fullName evidence="1">Bacitracin resistance protein</fullName>
    </alternativeName>
    <alternativeName>
        <fullName evidence="1">Undecaprenyl pyrophosphate phosphatase</fullName>
    </alternativeName>
</protein>
<gene>
    <name evidence="1" type="primary">uppP</name>
    <name type="ordered locus">Amet_4339</name>
</gene>
<feature type="chain" id="PRO_1000062784" description="Undecaprenyl-diphosphatase">
    <location>
        <begin position="1"/>
        <end position="275"/>
    </location>
</feature>
<feature type="transmembrane region" description="Helical" evidence="1">
    <location>
        <begin position="1"/>
        <end position="21"/>
    </location>
</feature>
<feature type="transmembrane region" description="Helical" evidence="1">
    <location>
        <begin position="41"/>
        <end position="61"/>
    </location>
</feature>
<feature type="transmembrane region" description="Helical" evidence="1">
    <location>
        <begin position="95"/>
        <end position="115"/>
    </location>
</feature>
<feature type="transmembrane region" description="Helical" evidence="1">
    <location>
        <begin position="118"/>
        <end position="138"/>
    </location>
</feature>
<feature type="transmembrane region" description="Helical" evidence="1">
    <location>
        <begin position="192"/>
        <end position="212"/>
    </location>
</feature>
<feature type="transmembrane region" description="Helical" evidence="1">
    <location>
        <begin position="223"/>
        <end position="243"/>
    </location>
</feature>
<feature type="transmembrane region" description="Helical" evidence="1">
    <location>
        <begin position="255"/>
        <end position="275"/>
    </location>
</feature>